<comment type="function">
    <text evidence="1">Binds together with bS18 to 16S ribosomal RNA.</text>
</comment>
<comment type="similarity">
    <text evidence="1">Belongs to the bacterial ribosomal protein bS6 family.</text>
</comment>
<accession>B1XDV1</accession>
<organism>
    <name type="scientific">Escherichia coli (strain K12 / DH10B)</name>
    <dbReference type="NCBI Taxonomy" id="316385"/>
    <lineage>
        <taxon>Bacteria</taxon>
        <taxon>Pseudomonadati</taxon>
        <taxon>Pseudomonadota</taxon>
        <taxon>Gammaproteobacteria</taxon>
        <taxon>Enterobacterales</taxon>
        <taxon>Enterobacteriaceae</taxon>
        <taxon>Escherichia</taxon>
    </lineage>
</organism>
<name>RS6_ECODH</name>
<sequence>MRHYEIVFMVHPDQSEQVPGMIERYTAAITGAEGKIHRLEDWGRRQLAYPINKLHKAHYVLMNVEAPQEVIDELETTFRFNDAVIRSMVMRTKHAVTEASPMVKAKDERRERRDDFANETADDAEAGDSEE</sequence>
<reference key="1">
    <citation type="journal article" date="2008" name="J. Bacteriol.">
        <title>The complete genome sequence of Escherichia coli DH10B: insights into the biology of a laboratory workhorse.</title>
        <authorList>
            <person name="Durfee T."/>
            <person name="Nelson R."/>
            <person name="Baldwin S."/>
            <person name="Plunkett G. III"/>
            <person name="Burland V."/>
            <person name="Mau B."/>
            <person name="Petrosino J.F."/>
            <person name="Qin X."/>
            <person name="Muzny D.M."/>
            <person name="Ayele M."/>
            <person name="Gibbs R.A."/>
            <person name="Csorgo B."/>
            <person name="Posfai G."/>
            <person name="Weinstock G.M."/>
            <person name="Blattner F.R."/>
        </authorList>
    </citation>
    <scope>NUCLEOTIDE SEQUENCE [LARGE SCALE GENOMIC DNA]</scope>
    <source>
        <strain>K12 / DH10B</strain>
    </source>
</reference>
<protein>
    <recommendedName>
        <fullName evidence="1">Small ribosomal subunit protein bS6</fullName>
    </recommendedName>
    <alternativeName>
        <fullName evidence="3">30S ribosomal protein S6</fullName>
    </alternativeName>
</protein>
<keyword id="KW-0007">Acetylation</keyword>
<keyword id="KW-0687">Ribonucleoprotein</keyword>
<keyword id="KW-0689">Ribosomal protein</keyword>
<keyword id="KW-0694">RNA-binding</keyword>
<keyword id="KW-0699">rRNA-binding</keyword>
<feature type="chain" id="PRO_1000120747" description="Small ribosomal subunit protein bS6">
    <location>
        <begin position="1"/>
        <end position="131"/>
    </location>
</feature>
<feature type="region of interest" description="Disordered" evidence="2">
    <location>
        <begin position="98"/>
        <end position="131"/>
    </location>
</feature>
<feature type="compositionally biased region" description="Basic and acidic residues" evidence="2">
    <location>
        <begin position="104"/>
        <end position="116"/>
    </location>
</feature>
<feature type="compositionally biased region" description="Acidic residues" evidence="2">
    <location>
        <begin position="120"/>
        <end position="131"/>
    </location>
</feature>
<feature type="modified residue" description="N6-acetyllysine" evidence="1">
    <location>
        <position position="93"/>
    </location>
</feature>
<evidence type="ECO:0000255" key="1">
    <source>
        <dbReference type="HAMAP-Rule" id="MF_00360"/>
    </source>
</evidence>
<evidence type="ECO:0000256" key="2">
    <source>
        <dbReference type="SAM" id="MobiDB-lite"/>
    </source>
</evidence>
<evidence type="ECO:0000305" key="3"/>
<gene>
    <name evidence="1" type="primary">rpsF</name>
    <name type="ordered locus">ECDH10B_4395</name>
</gene>
<proteinExistence type="inferred from homology"/>
<dbReference type="EMBL" id="CP000948">
    <property type="protein sequence ID" value="ACB05188.1"/>
    <property type="molecule type" value="Genomic_DNA"/>
</dbReference>
<dbReference type="RefSeq" id="WP_001216676.1">
    <property type="nucleotide sequence ID" value="NC_010473.1"/>
</dbReference>
<dbReference type="SMR" id="B1XDV1"/>
<dbReference type="GeneID" id="93777623"/>
<dbReference type="KEGG" id="ecd:ECDH10B_4395"/>
<dbReference type="HOGENOM" id="CLU_113441_6_1_6"/>
<dbReference type="GO" id="GO:0022627">
    <property type="term" value="C:cytosolic small ribosomal subunit"/>
    <property type="evidence" value="ECO:0007669"/>
    <property type="project" value="TreeGrafter"/>
</dbReference>
<dbReference type="GO" id="GO:0070181">
    <property type="term" value="F:small ribosomal subunit rRNA binding"/>
    <property type="evidence" value="ECO:0007669"/>
    <property type="project" value="TreeGrafter"/>
</dbReference>
<dbReference type="GO" id="GO:0003735">
    <property type="term" value="F:structural constituent of ribosome"/>
    <property type="evidence" value="ECO:0007669"/>
    <property type="project" value="InterPro"/>
</dbReference>
<dbReference type="GO" id="GO:0006412">
    <property type="term" value="P:translation"/>
    <property type="evidence" value="ECO:0007669"/>
    <property type="project" value="UniProtKB-UniRule"/>
</dbReference>
<dbReference type="CDD" id="cd00473">
    <property type="entry name" value="bS6"/>
    <property type="match status" value="1"/>
</dbReference>
<dbReference type="FunFam" id="3.30.70.60:FF:000003">
    <property type="entry name" value="30S ribosomal protein S6"/>
    <property type="match status" value="1"/>
</dbReference>
<dbReference type="Gene3D" id="3.30.70.60">
    <property type="match status" value="1"/>
</dbReference>
<dbReference type="HAMAP" id="MF_00360">
    <property type="entry name" value="Ribosomal_bS6"/>
    <property type="match status" value="1"/>
</dbReference>
<dbReference type="InterPro" id="IPR000529">
    <property type="entry name" value="Ribosomal_bS6"/>
</dbReference>
<dbReference type="InterPro" id="IPR020815">
    <property type="entry name" value="Ribosomal_bS6_CS"/>
</dbReference>
<dbReference type="InterPro" id="IPR035980">
    <property type="entry name" value="Ribosomal_bS6_sf"/>
</dbReference>
<dbReference type="InterPro" id="IPR020814">
    <property type="entry name" value="Ribosomal_S6_plastid/chlpt"/>
</dbReference>
<dbReference type="InterPro" id="IPR014717">
    <property type="entry name" value="Transl_elong_EF1B/ribsomal_bS6"/>
</dbReference>
<dbReference type="NCBIfam" id="TIGR00166">
    <property type="entry name" value="S6"/>
    <property type="match status" value="1"/>
</dbReference>
<dbReference type="PANTHER" id="PTHR21011">
    <property type="entry name" value="MITOCHONDRIAL 28S RIBOSOMAL PROTEIN S6"/>
    <property type="match status" value="1"/>
</dbReference>
<dbReference type="PANTHER" id="PTHR21011:SF1">
    <property type="entry name" value="SMALL RIBOSOMAL SUBUNIT PROTEIN BS6M"/>
    <property type="match status" value="1"/>
</dbReference>
<dbReference type="Pfam" id="PF01250">
    <property type="entry name" value="Ribosomal_S6"/>
    <property type="match status" value="1"/>
</dbReference>
<dbReference type="SUPFAM" id="SSF54995">
    <property type="entry name" value="Ribosomal protein S6"/>
    <property type="match status" value="1"/>
</dbReference>
<dbReference type="PROSITE" id="PS01048">
    <property type="entry name" value="RIBOSOMAL_S6"/>
    <property type="match status" value="1"/>
</dbReference>